<accession>P84768</accession>
<comment type="function">
    <text evidence="2">Does not function as a hemocyanin.</text>
</comment>
<comment type="subunit">
    <text evidence="1">Hexamer.</text>
</comment>
<comment type="tissue specificity">
    <text evidence="3">Hemolymph.</text>
</comment>
<comment type="similarity">
    <text evidence="5">Belongs to the tyrosinase family. Hemocyanin subfamily.</text>
</comment>
<name>PHCY_LIOHO</name>
<protein>
    <recommendedName>
        <fullName>Pseudohemocyanin</fullName>
    </recommendedName>
</protein>
<keyword id="KW-0903">Direct protein sequencing</keyword>
<dbReference type="GO" id="GO:0005615">
    <property type="term" value="C:extracellular space"/>
    <property type="evidence" value="ECO:0000314"/>
    <property type="project" value="UniProtKB"/>
</dbReference>
<feature type="chain" id="PRO_0000223493" description="Pseudohemocyanin">
    <location>
        <begin position="1"/>
        <end position="12" status="greater than"/>
    </location>
</feature>
<feature type="non-terminal residue" evidence="4">
    <location>
        <position position="12"/>
    </location>
</feature>
<sequence length="12" mass="1350">DEPDGVPTHQKQ</sequence>
<organism>
    <name type="scientific">Liocarcinus holsatus</name>
    <name type="common">Flying crab</name>
    <name type="synonym">Polybius holsatus</name>
    <dbReference type="NCBI Taxonomy" id="368048"/>
    <lineage>
        <taxon>Eukaryota</taxon>
        <taxon>Metazoa</taxon>
        <taxon>Ecdysozoa</taxon>
        <taxon>Arthropoda</taxon>
        <taxon>Crustacea</taxon>
        <taxon>Multicrustacea</taxon>
        <taxon>Malacostraca</taxon>
        <taxon>Eumalacostraca</taxon>
        <taxon>Eucarida</taxon>
        <taxon>Decapoda</taxon>
        <taxon>Pleocyemata</taxon>
        <taxon>Brachyura</taxon>
        <taxon>Eubrachyura</taxon>
        <taxon>Portunoidea</taxon>
        <taxon>Polybiidae</taxon>
        <taxon>Liocarcinus</taxon>
    </lineage>
</organism>
<evidence type="ECO:0000250" key="1">
    <source>
        <dbReference type="UniProtKB" id="Q6KF81"/>
    </source>
</evidence>
<evidence type="ECO:0000250" key="2">
    <source>
        <dbReference type="UniProtKB" id="Q6KF82"/>
    </source>
</evidence>
<evidence type="ECO:0000269" key="3">
    <source ref="1"/>
</evidence>
<evidence type="ECO:0000303" key="4">
    <source ref="1"/>
</evidence>
<evidence type="ECO:0000305" key="5"/>
<proteinExistence type="evidence at protein level"/>
<reference evidence="5" key="1">
    <citation type="journal article" date="2007" name="Mar. Biol.">
        <title>Structural and functional heterogeneity of hemocyanin: intra- and inter-specific comparison in four species of portunid crabs (Crustacea: Portunidae).</title>
        <authorList>
            <person name="Giomi F."/>
            <person name="Raicevich S."/>
            <person name="Ferrarese A."/>
            <person name="Pranovi F."/>
            <person name="Di Muro P."/>
            <person name="Beltramin K."/>
        </authorList>
    </citation>
    <scope>PROTEIN SEQUENCE</scope>
    <scope>TISSUE SPECIFICITY</scope>
    <source>
        <tissue evidence="3">Hemolymph</tissue>
    </source>
</reference>